<feature type="chain" id="PRO_1000069675" description="Thymidine phosphorylase">
    <location>
        <begin position="1"/>
        <end position="443"/>
    </location>
</feature>
<gene>
    <name evidence="1" type="primary">deoA</name>
    <name type="ordered locus">Sputw3181_1190</name>
</gene>
<comment type="function">
    <text evidence="1">The enzymes which catalyze the reversible phosphorolysis of pyrimidine nucleosides are involved in the degradation of these compounds and in their utilization as carbon and energy sources, or in the rescue of pyrimidine bases for nucleotide synthesis.</text>
</comment>
<comment type="catalytic activity">
    <reaction evidence="1">
        <text>thymidine + phosphate = 2-deoxy-alpha-D-ribose 1-phosphate + thymine</text>
        <dbReference type="Rhea" id="RHEA:16037"/>
        <dbReference type="ChEBI" id="CHEBI:17748"/>
        <dbReference type="ChEBI" id="CHEBI:17821"/>
        <dbReference type="ChEBI" id="CHEBI:43474"/>
        <dbReference type="ChEBI" id="CHEBI:57259"/>
        <dbReference type="EC" id="2.4.2.4"/>
    </reaction>
</comment>
<comment type="pathway">
    <text evidence="1">Pyrimidine metabolism; dTMP biosynthesis via salvage pathway; dTMP from thymine: step 1/2.</text>
</comment>
<comment type="subunit">
    <text evidence="1">Homodimer.</text>
</comment>
<comment type="similarity">
    <text evidence="1">Belongs to the thymidine/pyrimidine-nucleoside phosphorylase family.</text>
</comment>
<accession>A1RH88</accession>
<dbReference type="EC" id="2.4.2.4" evidence="1"/>
<dbReference type="EMBL" id="CP000503">
    <property type="protein sequence ID" value="ABM24033.1"/>
    <property type="molecule type" value="Genomic_DNA"/>
</dbReference>
<dbReference type="RefSeq" id="WP_011788541.1">
    <property type="nucleotide sequence ID" value="NC_008750.1"/>
</dbReference>
<dbReference type="SMR" id="A1RH88"/>
<dbReference type="GeneID" id="67444435"/>
<dbReference type="KEGG" id="shw:Sputw3181_1190"/>
<dbReference type="HOGENOM" id="CLU_025040_0_1_6"/>
<dbReference type="UniPathway" id="UPA00578">
    <property type="reaction ID" value="UER00638"/>
</dbReference>
<dbReference type="Proteomes" id="UP000002597">
    <property type="component" value="Chromosome"/>
</dbReference>
<dbReference type="GO" id="GO:0005829">
    <property type="term" value="C:cytosol"/>
    <property type="evidence" value="ECO:0007669"/>
    <property type="project" value="TreeGrafter"/>
</dbReference>
<dbReference type="GO" id="GO:0004645">
    <property type="term" value="F:1,4-alpha-oligoglucan phosphorylase activity"/>
    <property type="evidence" value="ECO:0007669"/>
    <property type="project" value="InterPro"/>
</dbReference>
<dbReference type="GO" id="GO:0009032">
    <property type="term" value="F:thymidine phosphorylase activity"/>
    <property type="evidence" value="ECO:0007669"/>
    <property type="project" value="UniProtKB-UniRule"/>
</dbReference>
<dbReference type="GO" id="GO:0006206">
    <property type="term" value="P:pyrimidine nucleobase metabolic process"/>
    <property type="evidence" value="ECO:0007669"/>
    <property type="project" value="InterPro"/>
</dbReference>
<dbReference type="GO" id="GO:0046104">
    <property type="term" value="P:thymidine metabolic process"/>
    <property type="evidence" value="ECO:0007669"/>
    <property type="project" value="UniProtKB-UniRule"/>
</dbReference>
<dbReference type="FunFam" id="3.40.1030.10:FF:000001">
    <property type="entry name" value="Thymidine phosphorylase"/>
    <property type="match status" value="1"/>
</dbReference>
<dbReference type="FunFam" id="3.90.1170.30:FF:000001">
    <property type="entry name" value="Thymidine phosphorylase"/>
    <property type="match status" value="1"/>
</dbReference>
<dbReference type="Gene3D" id="3.40.1030.10">
    <property type="entry name" value="Nucleoside phosphorylase/phosphoribosyltransferase catalytic domain"/>
    <property type="match status" value="1"/>
</dbReference>
<dbReference type="Gene3D" id="3.90.1170.30">
    <property type="entry name" value="Pyrimidine nucleoside phosphorylase-like, C-terminal domain"/>
    <property type="match status" value="1"/>
</dbReference>
<dbReference type="Gene3D" id="1.20.970.10">
    <property type="entry name" value="Transferase, Pyrimidine Nucleoside Phosphorylase, Chain C"/>
    <property type="match status" value="1"/>
</dbReference>
<dbReference type="HAMAP" id="MF_01628">
    <property type="entry name" value="Thymid_phosp"/>
    <property type="match status" value="1"/>
</dbReference>
<dbReference type="InterPro" id="IPR000312">
    <property type="entry name" value="Glycosyl_Trfase_fam3"/>
</dbReference>
<dbReference type="InterPro" id="IPR017459">
    <property type="entry name" value="Glycosyl_Trfase_fam3_N_dom"/>
</dbReference>
<dbReference type="InterPro" id="IPR036320">
    <property type="entry name" value="Glycosyl_Trfase_fam3_N_dom_sf"/>
</dbReference>
<dbReference type="InterPro" id="IPR035902">
    <property type="entry name" value="Nuc_phospho_transferase"/>
</dbReference>
<dbReference type="InterPro" id="IPR036566">
    <property type="entry name" value="PYNP-like_C_sf"/>
</dbReference>
<dbReference type="InterPro" id="IPR013102">
    <property type="entry name" value="PYNP_C"/>
</dbReference>
<dbReference type="InterPro" id="IPR018090">
    <property type="entry name" value="Pyrmidine_PPas_bac/euk"/>
</dbReference>
<dbReference type="InterPro" id="IPR017872">
    <property type="entry name" value="Pyrmidine_PPase_CS"/>
</dbReference>
<dbReference type="InterPro" id="IPR000053">
    <property type="entry name" value="Thymidine/pyrmidine_PPase"/>
</dbReference>
<dbReference type="InterPro" id="IPR013465">
    <property type="entry name" value="Thymidine_Pase"/>
</dbReference>
<dbReference type="NCBIfam" id="NF004490">
    <property type="entry name" value="PRK05820.1"/>
    <property type="match status" value="1"/>
</dbReference>
<dbReference type="NCBIfam" id="TIGR02643">
    <property type="entry name" value="T_phosphoryl"/>
    <property type="match status" value="1"/>
</dbReference>
<dbReference type="NCBIfam" id="TIGR02644">
    <property type="entry name" value="Y_phosphoryl"/>
    <property type="match status" value="1"/>
</dbReference>
<dbReference type="PANTHER" id="PTHR10515">
    <property type="entry name" value="THYMIDINE PHOSPHORYLASE"/>
    <property type="match status" value="1"/>
</dbReference>
<dbReference type="PANTHER" id="PTHR10515:SF0">
    <property type="entry name" value="THYMIDINE PHOSPHORYLASE"/>
    <property type="match status" value="1"/>
</dbReference>
<dbReference type="Pfam" id="PF02885">
    <property type="entry name" value="Glycos_trans_3N"/>
    <property type="match status" value="1"/>
</dbReference>
<dbReference type="Pfam" id="PF00591">
    <property type="entry name" value="Glycos_transf_3"/>
    <property type="match status" value="1"/>
</dbReference>
<dbReference type="Pfam" id="PF07831">
    <property type="entry name" value="PYNP_C"/>
    <property type="match status" value="1"/>
</dbReference>
<dbReference type="PIRSF" id="PIRSF000478">
    <property type="entry name" value="TP_PyNP"/>
    <property type="match status" value="1"/>
</dbReference>
<dbReference type="SMART" id="SM00941">
    <property type="entry name" value="PYNP_C"/>
    <property type="match status" value="1"/>
</dbReference>
<dbReference type="SUPFAM" id="SSF52418">
    <property type="entry name" value="Nucleoside phosphorylase/phosphoribosyltransferase catalytic domain"/>
    <property type="match status" value="1"/>
</dbReference>
<dbReference type="SUPFAM" id="SSF47648">
    <property type="entry name" value="Nucleoside phosphorylase/phosphoribosyltransferase N-terminal domain"/>
    <property type="match status" value="1"/>
</dbReference>
<dbReference type="SUPFAM" id="SSF54680">
    <property type="entry name" value="Pyrimidine nucleoside phosphorylase C-terminal domain"/>
    <property type="match status" value="1"/>
</dbReference>
<dbReference type="PROSITE" id="PS00647">
    <property type="entry name" value="THYMID_PHOSPHORYLASE"/>
    <property type="match status" value="1"/>
</dbReference>
<proteinExistence type="inferred from homology"/>
<keyword id="KW-0328">Glycosyltransferase</keyword>
<keyword id="KW-0808">Transferase</keyword>
<evidence type="ECO:0000255" key="1">
    <source>
        <dbReference type="HAMAP-Rule" id="MF_01628"/>
    </source>
</evidence>
<name>TYPH_SHESW</name>
<protein>
    <recommendedName>
        <fullName evidence="1">Thymidine phosphorylase</fullName>
        <ecNumber evidence="1">2.4.2.4</ecNumber>
    </recommendedName>
    <alternativeName>
        <fullName evidence="1">TdRPase</fullName>
    </alternativeName>
</protein>
<organism>
    <name type="scientific">Shewanella sp. (strain W3-18-1)</name>
    <dbReference type="NCBI Taxonomy" id="351745"/>
    <lineage>
        <taxon>Bacteria</taxon>
        <taxon>Pseudomonadati</taxon>
        <taxon>Pseudomonadota</taxon>
        <taxon>Gammaproteobacteria</taxon>
        <taxon>Alteromonadales</taxon>
        <taxon>Shewanellaceae</taxon>
        <taxon>Shewanella</taxon>
    </lineage>
</organism>
<sequence>MFLAQEIIRKKRNGLALSPAEIQFFVQGITTNAVSEGQIAAFGMAVYFNDMNMDERIALTTAMRDSGTVLNWQSLGLNGPVIDKHSTGGVGDVISLMLGPMAAACGGYVPMISGRGLGHTGGTLDKFDAIPGYQTEPSSELFRKVVKEVGVAIIGQTGDLVPADKRFYSIRDNTATVESISLITASILSKKLACNLDALAMDVKVGSGAFMPTYEASEELARSITAVANGAGTKTTALLTDMNQVLASCAGNAVEVKEAIDFLTGAYRNPRLYEVTMGLCAEMLLLGGLASNETEARAKLNRVLDNGRAAEIFGKMVSGLGGPVDFVENYSKYLPQSQIIRPVFADAKGYAYSMDTRELGLAVVTLGGGRRKPGDALDYSVGLTQVCALGDKIDSSTPIAVIHAQSEAAFTEAENAVKKAIHIGETAPEKTPEIYAYIRAADL</sequence>
<reference key="1">
    <citation type="submission" date="2006-12" db="EMBL/GenBank/DDBJ databases">
        <title>Complete sequence of Shewanella sp. W3-18-1.</title>
        <authorList>
            <consortium name="US DOE Joint Genome Institute"/>
            <person name="Copeland A."/>
            <person name="Lucas S."/>
            <person name="Lapidus A."/>
            <person name="Barry K."/>
            <person name="Detter J.C."/>
            <person name="Glavina del Rio T."/>
            <person name="Hammon N."/>
            <person name="Israni S."/>
            <person name="Dalin E."/>
            <person name="Tice H."/>
            <person name="Pitluck S."/>
            <person name="Chain P."/>
            <person name="Malfatti S."/>
            <person name="Shin M."/>
            <person name="Vergez L."/>
            <person name="Schmutz J."/>
            <person name="Larimer F."/>
            <person name="Land M."/>
            <person name="Hauser L."/>
            <person name="Kyrpides N."/>
            <person name="Lykidis A."/>
            <person name="Tiedje J."/>
            <person name="Richardson P."/>
        </authorList>
    </citation>
    <scope>NUCLEOTIDE SEQUENCE [LARGE SCALE GENOMIC DNA]</scope>
    <source>
        <strain>W3-18-1</strain>
    </source>
</reference>